<proteinExistence type="inferred from homology"/>
<organism>
    <name type="scientific">Staphylococcus aureus (strain MSSA476)</name>
    <dbReference type="NCBI Taxonomy" id="282459"/>
    <lineage>
        <taxon>Bacteria</taxon>
        <taxon>Bacillati</taxon>
        <taxon>Bacillota</taxon>
        <taxon>Bacilli</taxon>
        <taxon>Bacillales</taxon>
        <taxon>Staphylococcaceae</taxon>
        <taxon>Staphylococcus</taxon>
    </lineage>
</organism>
<protein>
    <recommendedName>
        <fullName evidence="2">Type VII secretion system extracellular protein B</fullName>
        <shortName evidence="2">Ess extracellular protein B</shortName>
    </recommendedName>
</protein>
<accession>Q6GCI3</accession>
<dbReference type="EMBL" id="BX571857">
    <property type="protein sequence ID" value="CAG42036.1"/>
    <property type="molecule type" value="Genomic_DNA"/>
</dbReference>
<dbReference type="RefSeq" id="WP_000509667.1">
    <property type="nucleotide sequence ID" value="NC_002953.3"/>
</dbReference>
<dbReference type="SMR" id="Q6GCI3"/>
<dbReference type="KEGG" id="sas:SAS0265"/>
<dbReference type="HOGENOM" id="CLU_2248426_0_0_9"/>
<dbReference type="GO" id="GO:0005576">
    <property type="term" value="C:extracellular region"/>
    <property type="evidence" value="ECO:0007669"/>
    <property type="project" value="UniProtKB-SubCell"/>
</dbReference>
<dbReference type="InterPro" id="IPR036689">
    <property type="entry name" value="ESAT-6-like_sf"/>
</dbReference>
<dbReference type="InterPro" id="IPR010310">
    <property type="entry name" value="T7SS_ESAT-6-like"/>
</dbReference>
<dbReference type="Pfam" id="PF06013">
    <property type="entry name" value="WXG100"/>
    <property type="match status" value="1"/>
</dbReference>
<dbReference type="SUPFAM" id="SSF140453">
    <property type="entry name" value="EsxAB dimer-like"/>
    <property type="match status" value="1"/>
</dbReference>
<evidence type="ECO:0000250" key="1">
    <source>
        <dbReference type="UniProtKB" id="A0A0H2XIE9"/>
    </source>
</evidence>
<evidence type="ECO:0000250" key="2">
    <source>
        <dbReference type="UniProtKB" id="P0C047"/>
    </source>
</evidence>
<evidence type="ECO:0000250" key="3">
    <source>
        <dbReference type="UniProtKB" id="Q2G182"/>
    </source>
</evidence>
<evidence type="ECO:0000305" key="4"/>
<keyword id="KW-0964">Secreted</keyword>
<keyword id="KW-0843">Virulence</keyword>
<comment type="function">
    <text evidence="1 2">Virulence factor that is important for the establishment of infection in the host. EsxB is required for EsxA synthesis as well as secretion (By similarity). Mediates together with EsxA the release of S.aureus from the host cell. Also inhibits host cytokine production and thus modulates dendritic cell-mediated immunity (By similarity).</text>
</comment>
<comment type="subunit">
    <text evidence="3">Homodimer. When mixed with EsxA does not form heterodimers.</text>
</comment>
<comment type="subcellular location">
    <subcellularLocation>
        <location evidence="2">Secreted</location>
    </subcellularLocation>
    <text evidence="2">Secreted via the ESAT-6 secretion system (Ess) / type VII secretion system (T7SS).</text>
</comment>
<comment type="similarity">
    <text evidence="4">Belongs to the WXG100 family.</text>
</comment>
<feature type="chain" id="PRO_0000167833" description="Type VII secretion system extracellular protein B">
    <location>
        <begin position="1"/>
        <end position="104"/>
    </location>
</feature>
<sequence>MGGYKGIKADGGKVDQAKQLAAKTAKDIEACQKQTQQLAEYIEGSDWEGQFANKVKDVLLIMAKFQEELVQPIADHQKAIDNLSQNLAKYDTLSIKQGLDRVNP</sequence>
<name>ESXB_STAAS</name>
<reference key="1">
    <citation type="journal article" date="2004" name="Proc. Natl. Acad. Sci. U.S.A.">
        <title>Complete genomes of two clinical Staphylococcus aureus strains: evidence for the rapid evolution of virulence and drug resistance.</title>
        <authorList>
            <person name="Holden M.T.G."/>
            <person name="Feil E.J."/>
            <person name="Lindsay J.A."/>
            <person name="Peacock S.J."/>
            <person name="Day N.P.J."/>
            <person name="Enright M.C."/>
            <person name="Foster T.J."/>
            <person name="Moore C.E."/>
            <person name="Hurst L."/>
            <person name="Atkin R."/>
            <person name="Barron A."/>
            <person name="Bason N."/>
            <person name="Bentley S.D."/>
            <person name="Chillingworth C."/>
            <person name="Chillingworth T."/>
            <person name="Churcher C."/>
            <person name="Clark L."/>
            <person name="Corton C."/>
            <person name="Cronin A."/>
            <person name="Doggett J."/>
            <person name="Dowd L."/>
            <person name="Feltwell T."/>
            <person name="Hance Z."/>
            <person name="Harris B."/>
            <person name="Hauser H."/>
            <person name="Holroyd S."/>
            <person name="Jagels K."/>
            <person name="James K.D."/>
            <person name="Lennard N."/>
            <person name="Line A."/>
            <person name="Mayes R."/>
            <person name="Moule S."/>
            <person name="Mungall K."/>
            <person name="Ormond D."/>
            <person name="Quail M.A."/>
            <person name="Rabbinowitsch E."/>
            <person name="Rutherford K.M."/>
            <person name="Sanders M."/>
            <person name="Sharp S."/>
            <person name="Simmonds M."/>
            <person name="Stevens K."/>
            <person name="Whitehead S."/>
            <person name="Barrell B.G."/>
            <person name="Spratt B.G."/>
            <person name="Parkhill J."/>
        </authorList>
    </citation>
    <scope>NUCLEOTIDE SEQUENCE [LARGE SCALE GENOMIC DNA]</scope>
    <source>
        <strain>MSSA476</strain>
    </source>
</reference>
<gene>
    <name evidence="2" type="primary">esxB</name>
    <name type="ordered locus">SAS0265</name>
</gene>